<comment type="function">
    <text evidence="1">Structural component of the T=16 icosahedral capsid. The capsid is composed of pentamers and hexamers of major capsid protein/MCP, which are linked together by heterotrimers called triplexes. These triplexes are formed by a single molecule of triplex protein 1/TRX1 and two copies of triplex protein 2/TRX2. Additionally, TRX1 is required for efficient transport of TRX2 to the nucleus, which is the site of capsid assembly.</text>
</comment>
<comment type="subunit">
    <text evidence="1">Interacts with TRX1 and major capisd protein/MCP.</text>
</comment>
<comment type="subcellular location">
    <subcellularLocation>
        <location evidence="1">Virion</location>
    </subcellularLocation>
    <subcellularLocation>
        <location evidence="1">Host nucleus</location>
    </subcellularLocation>
</comment>
<comment type="similarity">
    <text evidence="1">Belongs to the herpesviridae TRX2 protein family.</text>
</comment>
<protein>
    <recommendedName>
        <fullName evidence="1">Triplex capsid protein 2</fullName>
    </recommendedName>
</protein>
<keyword id="KW-0167">Capsid protein</keyword>
<keyword id="KW-1048">Host nucleus</keyword>
<keyword id="KW-1185">Reference proteome</keyword>
<keyword id="KW-0946">Virion</keyword>
<reference key="1">
    <citation type="journal article" date="1995" name="J. Mol. Biol.">
        <title>The DNA sequence of equine herpesvirus 2.</title>
        <authorList>
            <person name="Telford E.A.R."/>
            <person name="Watson M.S."/>
            <person name="Aird H.C."/>
            <person name="Perry J."/>
            <person name="Davison A.J."/>
        </authorList>
    </citation>
    <scope>NUCLEOTIDE SEQUENCE [LARGE SCALE GENOMIC DNA]</scope>
</reference>
<dbReference type="EMBL" id="U20824">
    <property type="protein sequence ID" value="AAC13813.1"/>
    <property type="molecule type" value="Genomic_DNA"/>
</dbReference>
<dbReference type="PIR" id="S55620">
    <property type="entry name" value="S55620"/>
</dbReference>
<dbReference type="SMR" id="Q66629"/>
<dbReference type="KEGG" id="vg:1461081"/>
<dbReference type="Proteomes" id="UP000007083">
    <property type="component" value="Segment"/>
</dbReference>
<dbReference type="GO" id="GO:0042025">
    <property type="term" value="C:host cell nucleus"/>
    <property type="evidence" value="ECO:0007669"/>
    <property type="project" value="UniProtKB-SubCell"/>
</dbReference>
<dbReference type="GO" id="GO:0019028">
    <property type="term" value="C:viral capsid"/>
    <property type="evidence" value="ECO:0007669"/>
    <property type="project" value="UniProtKB-KW"/>
</dbReference>
<dbReference type="GO" id="GO:0005198">
    <property type="term" value="F:structural molecule activity"/>
    <property type="evidence" value="ECO:0007669"/>
    <property type="project" value="InterPro"/>
</dbReference>
<dbReference type="HAMAP" id="MF_04019">
    <property type="entry name" value="HSV_TRX2"/>
    <property type="match status" value="1"/>
</dbReference>
<dbReference type="InterPro" id="IPR002690">
    <property type="entry name" value="Herpes_capsid_2"/>
</dbReference>
<dbReference type="Pfam" id="PF01802">
    <property type="entry name" value="Herpes_V23"/>
    <property type="match status" value="1"/>
</dbReference>
<organismHost>
    <name type="scientific">Equus caballus</name>
    <name type="common">Horse</name>
    <dbReference type="NCBI Taxonomy" id="9796"/>
</organismHost>
<feature type="chain" id="PRO_0000406074" description="Triplex capsid protein 2">
    <location>
        <begin position="1"/>
        <end position="300"/>
    </location>
</feature>
<accession>Q66629</accession>
<organism>
    <name type="scientific">Equine herpesvirus 2 (strain 86/87)</name>
    <name type="common">EHV-2</name>
    <dbReference type="NCBI Taxonomy" id="82831"/>
    <lineage>
        <taxon>Viruses</taxon>
        <taxon>Duplodnaviria</taxon>
        <taxon>Heunggongvirae</taxon>
        <taxon>Peploviricota</taxon>
        <taxon>Herviviricetes</taxon>
        <taxon>Herpesvirales</taxon>
        <taxon>Orthoherpesviridae</taxon>
        <taxon>Gammaherpesvirinae</taxon>
        <taxon>Percavirus</taxon>
        <taxon>Percavirus equidgamma2</taxon>
        <taxon>Equid gammaherpesvirus 2</taxon>
    </lineage>
</organism>
<name>TRX2_EHV2</name>
<gene>
    <name evidence="1" type="primary">TRX2</name>
    <name type="ordered locus">26</name>
</gene>
<evidence type="ECO:0000255" key="1">
    <source>
        <dbReference type="HAMAP-Rule" id="MF_04019"/>
    </source>
</evidence>
<proteinExistence type="inferred from homology"/>
<sequence length="300" mass="33418">MQVDSRIVVTLTSRLYADEISKLQERVGSVVPLKDSHRLQNLNSVGMYSVYMRNVAPDFVAMFSYLSEATLAILDEVTPDTLVFSRLDHSQNYELKNVYYPSFAWHSHTLLTVVPPVFGREAATVALESNGFEIVFPVVMPHALAQAVLQKLMLYNIYARLSDANVGDVNMDHVRFHATTLHHMGRAYTLHIDQANPGGMLGLLDNLAIYLAIISALLPNSLARLLPAIMRHEQHELLNIFAGVAPPDDGGDFNIEDDMQKMESFMAYMQSVSSIFNLGPKLRLGQYSSETQSGTAWLAS</sequence>